<accession>C0Q552</accession>
<organism>
    <name type="scientific">Salmonella paratyphi C (strain RKS4594)</name>
    <dbReference type="NCBI Taxonomy" id="476213"/>
    <lineage>
        <taxon>Bacteria</taxon>
        <taxon>Pseudomonadati</taxon>
        <taxon>Pseudomonadota</taxon>
        <taxon>Gammaproteobacteria</taxon>
        <taxon>Enterobacterales</taxon>
        <taxon>Enterobacteriaceae</taxon>
        <taxon>Salmonella</taxon>
    </lineage>
</organism>
<reference key="1">
    <citation type="journal article" date="2009" name="PLoS ONE">
        <title>Salmonella paratyphi C: genetic divergence from Salmonella choleraesuis and pathogenic convergence with Salmonella typhi.</title>
        <authorList>
            <person name="Liu W.-Q."/>
            <person name="Feng Y."/>
            <person name="Wang Y."/>
            <person name="Zou Q.-H."/>
            <person name="Chen F."/>
            <person name="Guo J.-T."/>
            <person name="Peng Y.-H."/>
            <person name="Jin Y."/>
            <person name="Li Y.-G."/>
            <person name="Hu S.-N."/>
            <person name="Johnston R.N."/>
            <person name="Liu G.-R."/>
            <person name="Liu S.-L."/>
        </authorList>
    </citation>
    <scope>NUCLEOTIDE SEQUENCE [LARGE SCALE GENOMIC DNA]</scope>
    <source>
        <strain>RKS4594</strain>
    </source>
</reference>
<feature type="chain" id="PRO_1000184879" description="Cation/acetate symporter ActP">
    <location>
        <begin position="1"/>
        <end position="549"/>
    </location>
</feature>
<feature type="transmembrane region" description="Helical" evidence="1">
    <location>
        <begin position="33"/>
        <end position="53"/>
    </location>
</feature>
<feature type="transmembrane region" description="Helical" evidence="1">
    <location>
        <begin position="77"/>
        <end position="97"/>
    </location>
</feature>
<feature type="transmembrane region" description="Helical" evidence="1">
    <location>
        <begin position="103"/>
        <end position="123"/>
    </location>
</feature>
<feature type="transmembrane region" description="Helical" evidence="1">
    <location>
        <begin position="148"/>
        <end position="168"/>
    </location>
</feature>
<feature type="transmembrane region" description="Helical" evidence="1">
    <location>
        <begin position="183"/>
        <end position="203"/>
    </location>
</feature>
<feature type="transmembrane region" description="Helical" evidence="1">
    <location>
        <begin position="206"/>
        <end position="226"/>
    </location>
</feature>
<feature type="transmembrane region" description="Helical" evidence="1">
    <location>
        <begin position="262"/>
        <end position="282"/>
    </location>
</feature>
<feature type="transmembrane region" description="Helical" evidence="1">
    <location>
        <begin position="303"/>
        <end position="323"/>
    </location>
</feature>
<feature type="transmembrane region" description="Helical" evidence="1">
    <location>
        <begin position="355"/>
        <end position="375"/>
    </location>
</feature>
<feature type="transmembrane region" description="Helical" evidence="1">
    <location>
        <begin position="404"/>
        <end position="424"/>
    </location>
</feature>
<feature type="transmembrane region" description="Helical" evidence="1">
    <location>
        <begin position="428"/>
        <end position="448"/>
    </location>
</feature>
<feature type="transmembrane region" description="Helical" evidence="1">
    <location>
        <begin position="464"/>
        <end position="484"/>
    </location>
</feature>
<feature type="transmembrane region" description="Helical" evidence="1">
    <location>
        <begin position="493"/>
        <end position="513"/>
    </location>
</feature>
<name>ACTP_SALPC</name>
<keyword id="KW-0997">Cell inner membrane</keyword>
<keyword id="KW-1003">Cell membrane</keyword>
<keyword id="KW-0406">Ion transport</keyword>
<keyword id="KW-0472">Membrane</keyword>
<keyword id="KW-0915">Sodium</keyword>
<keyword id="KW-0739">Sodium transport</keyword>
<keyword id="KW-0769">Symport</keyword>
<keyword id="KW-0812">Transmembrane</keyword>
<keyword id="KW-1133">Transmembrane helix</keyword>
<keyword id="KW-0813">Transport</keyword>
<protein>
    <recommendedName>
        <fullName evidence="1">Cation/acetate symporter ActP</fullName>
    </recommendedName>
    <alternativeName>
        <fullName evidence="1">Acetate permease</fullName>
    </alternativeName>
    <alternativeName>
        <fullName evidence="1">Acetate transporter ActP</fullName>
    </alternativeName>
</protein>
<comment type="function">
    <text evidence="1">Transports acetate.</text>
</comment>
<comment type="subcellular location">
    <subcellularLocation>
        <location evidence="1">Cell inner membrane</location>
        <topology evidence="1">Multi-pass membrane protein</topology>
    </subcellularLocation>
</comment>
<comment type="similarity">
    <text evidence="1">Belongs to the sodium:solute symporter (SSF) (TC 2.A.21) family.</text>
</comment>
<dbReference type="EMBL" id="CP000857">
    <property type="protein sequence ID" value="ACN48399.1"/>
    <property type="molecule type" value="Genomic_DNA"/>
</dbReference>
<dbReference type="RefSeq" id="WP_000832532.1">
    <property type="nucleotide sequence ID" value="NC_012125.1"/>
</dbReference>
<dbReference type="SMR" id="C0Q552"/>
<dbReference type="KEGG" id="sei:SPC_4337"/>
<dbReference type="HOGENOM" id="CLU_018808_8_3_6"/>
<dbReference type="Proteomes" id="UP000001599">
    <property type="component" value="Chromosome"/>
</dbReference>
<dbReference type="GO" id="GO:0005886">
    <property type="term" value="C:plasma membrane"/>
    <property type="evidence" value="ECO:0007669"/>
    <property type="project" value="UniProtKB-SubCell"/>
</dbReference>
<dbReference type="GO" id="GO:0015123">
    <property type="term" value="F:acetate transmembrane transporter activity"/>
    <property type="evidence" value="ECO:0007669"/>
    <property type="project" value="UniProtKB-UniRule"/>
</dbReference>
<dbReference type="GO" id="GO:0043879">
    <property type="term" value="F:glycolate transmembrane transporter activity"/>
    <property type="evidence" value="ECO:0007669"/>
    <property type="project" value="InterPro"/>
</dbReference>
<dbReference type="GO" id="GO:0015293">
    <property type="term" value="F:symporter activity"/>
    <property type="evidence" value="ECO:0007669"/>
    <property type="project" value="UniProtKB-KW"/>
</dbReference>
<dbReference type="GO" id="GO:0006847">
    <property type="term" value="P:plasma membrane acetate transport"/>
    <property type="evidence" value="ECO:0007669"/>
    <property type="project" value="TreeGrafter"/>
</dbReference>
<dbReference type="GO" id="GO:0006814">
    <property type="term" value="P:sodium ion transport"/>
    <property type="evidence" value="ECO:0007669"/>
    <property type="project" value="UniProtKB-KW"/>
</dbReference>
<dbReference type="CDD" id="cd11480">
    <property type="entry name" value="SLC5sbd_u4"/>
    <property type="match status" value="1"/>
</dbReference>
<dbReference type="FunFam" id="1.20.1730.10:FF:000001">
    <property type="entry name" value="Cation/acetate symporter ActP"/>
    <property type="match status" value="1"/>
</dbReference>
<dbReference type="Gene3D" id="1.20.1730.10">
    <property type="entry name" value="Sodium/glucose cotransporter"/>
    <property type="match status" value="1"/>
</dbReference>
<dbReference type="HAMAP" id="MF_01426">
    <property type="entry name" value="Acet_symport_ActP"/>
    <property type="match status" value="1"/>
</dbReference>
<dbReference type="InterPro" id="IPR014083">
    <property type="entry name" value="Cation/Ac_symporter_ActP"/>
</dbReference>
<dbReference type="InterPro" id="IPR038377">
    <property type="entry name" value="Na/Glc_symporter_sf"/>
</dbReference>
<dbReference type="InterPro" id="IPR001734">
    <property type="entry name" value="Na/solute_symporter"/>
</dbReference>
<dbReference type="InterPro" id="IPR018212">
    <property type="entry name" value="Na/solute_symporter_CS"/>
</dbReference>
<dbReference type="InterPro" id="IPR050277">
    <property type="entry name" value="Sodium:Solute_Symporter"/>
</dbReference>
<dbReference type="NCBIfam" id="NF006903">
    <property type="entry name" value="PRK09395.1"/>
    <property type="match status" value="1"/>
</dbReference>
<dbReference type="NCBIfam" id="NF009135">
    <property type="entry name" value="PRK12488.1"/>
    <property type="match status" value="1"/>
</dbReference>
<dbReference type="NCBIfam" id="TIGR00813">
    <property type="entry name" value="sss"/>
    <property type="match status" value="1"/>
</dbReference>
<dbReference type="NCBIfam" id="TIGR02711">
    <property type="entry name" value="symport_actP"/>
    <property type="match status" value="1"/>
</dbReference>
<dbReference type="PANTHER" id="PTHR48086:SF6">
    <property type="entry name" value="CATION_ACETATE SYMPORTER ACTP"/>
    <property type="match status" value="1"/>
</dbReference>
<dbReference type="PANTHER" id="PTHR48086">
    <property type="entry name" value="SODIUM/PROLINE SYMPORTER-RELATED"/>
    <property type="match status" value="1"/>
</dbReference>
<dbReference type="Pfam" id="PF00474">
    <property type="entry name" value="SSF"/>
    <property type="match status" value="1"/>
</dbReference>
<dbReference type="PROSITE" id="PS00456">
    <property type="entry name" value="NA_SOLUT_SYMP_1"/>
    <property type="match status" value="1"/>
</dbReference>
<dbReference type="PROSITE" id="PS00457">
    <property type="entry name" value="NA_SOLUT_SYMP_2"/>
    <property type="match status" value="1"/>
</dbReference>
<dbReference type="PROSITE" id="PS50283">
    <property type="entry name" value="NA_SOLUT_SYMP_3"/>
    <property type="match status" value="1"/>
</dbReference>
<evidence type="ECO:0000255" key="1">
    <source>
        <dbReference type="HAMAP-Rule" id="MF_01426"/>
    </source>
</evidence>
<sequence length="549" mass="59056">MKRVLTALAAALPFAAHAADAISGAVERQPTNWQAIIMFLIFVVFTLGITYWASKRVRSRSDYYTAGGNITGFQNGLAIAGDYMSAASFLGISALVFTSGYDGLIYSLGFLVGWPIILFLIAERLRNLGRYTFADVASYRLKQGPIRILSACGSLVVVALYLIAQMVGAGKLIELLFGLNYHIAVVLVGVLMMMYVLFGGMLATTWVQIIKAVLLLFGASFMAFMVMKHVGFSFNNLFTEAMAVHPKGTAIMSPGGLVQDPISALSLGLGLMFGTAGLPHILMRFFTVSDAREARKSVFYATGFMGYFYILTFIIGFGAIMLVGANPAYKDAAGALIGGNNMAAVHLANAVGGNLFLGFISAVAFATILAVVAGLTLAGASAVSHDLYANVFRKGATEREELKVSKITVLVLGVIAIILGFLFENQNIAFMVGLAFAIAASCNFPIILLSMYWSKLTTRGAMLGGWLGLLTAVVLMILGPTIWVQILGHEKAIFPYEYPALFSISVAFLGIWFFSATDNSAEGNREREQFRAQFIRSQTGFGVQQGRAH</sequence>
<gene>
    <name evidence="1" type="primary">actP</name>
    <name type="ordered locus">SPC_4337</name>
</gene>
<proteinExistence type="inferred from homology"/>